<comment type="function">
    <text evidence="1">NDH-1 shuttles electrons from NADH, via FMN and iron-sulfur (Fe-S) centers, to quinones in the respiratory chain. The immediate electron acceptor for the enzyme in this species is believed to be ubiquinone. Couples the redox reaction to proton translocation (for every two electrons transferred, four hydrogen ions are translocated across the cytoplasmic membrane), and thus conserves the redox energy in a proton gradient. This subunit may bind ubiquinone.</text>
</comment>
<comment type="catalytic activity">
    <reaction evidence="1">
        <text>a quinone + NADH + 5 H(+)(in) = a quinol + NAD(+) + 4 H(+)(out)</text>
        <dbReference type="Rhea" id="RHEA:57888"/>
        <dbReference type="ChEBI" id="CHEBI:15378"/>
        <dbReference type="ChEBI" id="CHEBI:24646"/>
        <dbReference type="ChEBI" id="CHEBI:57540"/>
        <dbReference type="ChEBI" id="CHEBI:57945"/>
        <dbReference type="ChEBI" id="CHEBI:132124"/>
    </reaction>
</comment>
<comment type="subunit">
    <text evidence="1">NDH-1 is composed of 14 different subunits. Subunits NuoA, H, J, K, L, M, N constitute the membrane sector of the complex.</text>
</comment>
<comment type="subcellular location">
    <subcellularLocation>
        <location evidence="1">Cell membrane</location>
        <topology evidence="1">Multi-pass membrane protein</topology>
    </subcellularLocation>
</comment>
<comment type="similarity">
    <text evidence="1">Belongs to the complex I subunit 1 family.</text>
</comment>
<reference key="1">
    <citation type="journal article" date="2003" name="Nature">
        <title>The genome sequence of Bacillus anthracis Ames and comparison to closely related bacteria.</title>
        <authorList>
            <person name="Read T.D."/>
            <person name="Peterson S.N."/>
            <person name="Tourasse N.J."/>
            <person name="Baillie L.W."/>
            <person name="Paulsen I.T."/>
            <person name="Nelson K.E."/>
            <person name="Tettelin H."/>
            <person name="Fouts D.E."/>
            <person name="Eisen J.A."/>
            <person name="Gill S.R."/>
            <person name="Holtzapple E.K."/>
            <person name="Okstad O.A."/>
            <person name="Helgason E."/>
            <person name="Rilstone J."/>
            <person name="Wu M."/>
            <person name="Kolonay J.F."/>
            <person name="Beanan M.J."/>
            <person name="Dodson R.J."/>
            <person name="Brinkac L.M."/>
            <person name="Gwinn M.L."/>
            <person name="DeBoy R.T."/>
            <person name="Madpu R."/>
            <person name="Daugherty S.C."/>
            <person name="Durkin A.S."/>
            <person name="Haft D.H."/>
            <person name="Nelson W.C."/>
            <person name="Peterson J.D."/>
            <person name="Pop M."/>
            <person name="Khouri H.M."/>
            <person name="Radune D."/>
            <person name="Benton J.L."/>
            <person name="Mahamoud Y."/>
            <person name="Jiang L."/>
            <person name="Hance I.R."/>
            <person name="Weidman J.F."/>
            <person name="Berry K.J."/>
            <person name="Plaut R.D."/>
            <person name="Wolf A.M."/>
            <person name="Watkins K.L."/>
            <person name="Nierman W.C."/>
            <person name="Hazen A."/>
            <person name="Cline R.T."/>
            <person name="Redmond C."/>
            <person name="Thwaite J.E."/>
            <person name="White O."/>
            <person name="Salzberg S.L."/>
            <person name="Thomason B."/>
            <person name="Friedlander A.M."/>
            <person name="Koehler T.M."/>
            <person name="Hanna P.C."/>
            <person name="Kolstoe A.-B."/>
            <person name="Fraser C.M."/>
        </authorList>
    </citation>
    <scope>NUCLEOTIDE SEQUENCE [LARGE SCALE GENOMIC DNA]</scope>
    <source>
        <strain>Ames / isolate Porton</strain>
    </source>
</reference>
<reference key="2">
    <citation type="submission" date="2004-01" db="EMBL/GenBank/DDBJ databases">
        <title>Complete genome sequence of Bacillus anthracis Sterne.</title>
        <authorList>
            <person name="Brettin T.S."/>
            <person name="Bruce D."/>
            <person name="Challacombe J.F."/>
            <person name="Gilna P."/>
            <person name="Han C."/>
            <person name="Hill K."/>
            <person name="Hitchcock P."/>
            <person name="Jackson P."/>
            <person name="Keim P."/>
            <person name="Longmire J."/>
            <person name="Lucas S."/>
            <person name="Okinaka R."/>
            <person name="Richardson P."/>
            <person name="Rubin E."/>
            <person name="Tice H."/>
        </authorList>
    </citation>
    <scope>NUCLEOTIDE SEQUENCE [LARGE SCALE GENOMIC DNA]</scope>
    <source>
        <strain>Sterne</strain>
    </source>
</reference>
<reference key="3">
    <citation type="journal article" date="2009" name="J. Bacteriol.">
        <title>The complete genome sequence of Bacillus anthracis Ames 'Ancestor'.</title>
        <authorList>
            <person name="Ravel J."/>
            <person name="Jiang L."/>
            <person name="Stanley S.T."/>
            <person name="Wilson M.R."/>
            <person name="Decker R.S."/>
            <person name="Read T.D."/>
            <person name="Worsham P."/>
            <person name="Keim P.S."/>
            <person name="Salzberg S.L."/>
            <person name="Fraser-Liggett C.M."/>
            <person name="Rasko D.A."/>
        </authorList>
    </citation>
    <scope>NUCLEOTIDE SEQUENCE [LARGE SCALE GENOMIC DNA]</scope>
    <source>
        <strain>Ames ancestor</strain>
    </source>
</reference>
<dbReference type="EC" id="7.1.1.-" evidence="1"/>
<dbReference type="EMBL" id="AE016879">
    <property type="protein sequence ID" value="AAP29182.1"/>
    <property type="molecule type" value="Genomic_DNA"/>
</dbReference>
<dbReference type="EMBL" id="AE017225">
    <property type="protein sequence ID" value="AAT57435.1"/>
    <property type="molecule type" value="Genomic_DNA"/>
</dbReference>
<dbReference type="EMBL" id="AE017334">
    <property type="protein sequence ID" value="AAT34681.1"/>
    <property type="molecule type" value="Genomic_DNA"/>
</dbReference>
<dbReference type="RefSeq" id="NP_847696.1">
    <property type="nucleotide sequence ID" value="NC_003997.3"/>
</dbReference>
<dbReference type="RefSeq" id="WP_000573430.1">
    <property type="nucleotide sequence ID" value="NZ_WXXJ01000038.1"/>
</dbReference>
<dbReference type="RefSeq" id="YP_031385.1">
    <property type="nucleotide sequence ID" value="NC_005945.1"/>
</dbReference>
<dbReference type="SMR" id="Q81K04"/>
<dbReference type="STRING" id="261594.GBAA_5538"/>
<dbReference type="DNASU" id="1085213"/>
<dbReference type="GeneID" id="93005827"/>
<dbReference type="KEGG" id="ban:BA_5538"/>
<dbReference type="KEGG" id="bar:GBAA_5538"/>
<dbReference type="KEGG" id="bat:BAS5146"/>
<dbReference type="PATRIC" id="fig|198094.11.peg.5498"/>
<dbReference type="eggNOG" id="COG1005">
    <property type="taxonomic scope" value="Bacteria"/>
</dbReference>
<dbReference type="HOGENOM" id="CLU_015134_0_1_9"/>
<dbReference type="OMA" id="WSGWASN"/>
<dbReference type="OrthoDB" id="9803734at2"/>
<dbReference type="Proteomes" id="UP000000427">
    <property type="component" value="Chromosome"/>
</dbReference>
<dbReference type="Proteomes" id="UP000000594">
    <property type="component" value="Chromosome"/>
</dbReference>
<dbReference type="GO" id="GO:0005886">
    <property type="term" value="C:plasma membrane"/>
    <property type="evidence" value="ECO:0007669"/>
    <property type="project" value="UniProtKB-SubCell"/>
</dbReference>
<dbReference type="GO" id="GO:0003954">
    <property type="term" value="F:NADH dehydrogenase activity"/>
    <property type="evidence" value="ECO:0007669"/>
    <property type="project" value="TreeGrafter"/>
</dbReference>
<dbReference type="GO" id="GO:0016655">
    <property type="term" value="F:oxidoreductase activity, acting on NAD(P)H, quinone or similar compound as acceptor"/>
    <property type="evidence" value="ECO:0007669"/>
    <property type="project" value="UniProtKB-UniRule"/>
</dbReference>
<dbReference type="GO" id="GO:0048038">
    <property type="term" value="F:quinone binding"/>
    <property type="evidence" value="ECO:0007669"/>
    <property type="project" value="UniProtKB-KW"/>
</dbReference>
<dbReference type="GO" id="GO:0009060">
    <property type="term" value="P:aerobic respiration"/>
    <property type="evidence" value="ECO:0007669"/>
    <property type="project" value="TreeGrafter"/>
</dbReference>
<dbReference type="HAMAP" id="MF_01350">
    <property type="entry name" value="NDH1_NuoH"/>
    <property type="match status" value="1"/>
</dbReference>
<dbReference type="InterPro" id="IPR001694">
    <property type="entry name" value="NADH_UbQ_OxRdtase_su1/FPO"/>
</dbReference>
<dbReference type="InterPro" id="IPR018086">
    <property type="entry name" value="NADH_UbQ_OxRdtase_su1_CS"/>
</dbReference>
<dbReference type="NCBIfam" id="NF004741">
    <property type="entry name" value="PRK06076.1-2"/>
    <property type="match status" value="1"/>
</dbReference>
<dbReference type="PANTHER" id="PTHR11432">
    <property type="entry name" value="NADH DEHYDROGENASE SUBUNIT 1"/>
    <property type="match status" value="1"/>
</dbReference>
<dbReference type="PANTHER" id="PTHR11432:SF3">
    <property type="entry name" value="NADH-UBIQUINONE OXIDOREDUCTASE CHAIN 1"/>
    <property type="match status" value="1"/>
</dbReference>
<dbReference type="Pfam" id="PF00146">
    <property type="entry name" value="NADHdh"/>
    <property type="match status" value="1"/>
</dbReference>
<dbReference type="PROSITE" id="PS00668">
    <property type="entry name" value="COMPLEX1_ND1_2"/>
    <property type="match status" value="1"/>
</dbReference>
<feature type="chain" id="PRO_0000240054" description="NADH-quinone oxidoreductase subunit H">
    <location>
        <begin position="1"/>
        <end position="333"/>
    </location>
</feature>
<feature type="transmembrane region" description="Helical" evidence="1">
    <location>
        <begin position="15"/>
        <end position="35"/>
    </location>
</feature>
<feature type="transmembrane region" description="Helical" evidence="1">
    <location>
        <begin position="88"/>
        <end position="108"/>
    </location>
</feature>
<feature type="transmembrane region" description="Helical" evidence="1">
    <location>
        <begin position="117"/>
        <end position="137"/>
    </location>
</feature>
<feature type="transmembrane region" description="Helical" evidence="1">
    <location>
        <begin position="159"/>
        <end position="179"/>
    </location>
</feature>
<feature type="transmembrane region" description="Helical" evidence="1">
    <location>
        <begin position="191"/>
        <end position="211"/>
    </location>
</feature>
<feature type="transmembrane region" description="Helical" evidence="1">
    <location>
        <begin position="239"/>
        <end position="259"/>
    </location>
</feature>
<feature type="transmembrane region" description="Helical" evidence="1">
    <location>
        <begin position="274"/>
        <end position="296"/>
    </location>
</feature>
<feature type="transmembrane region" description="Helical" evidence="1">
    <location>
        <begin position="313"/>
        <end position="333"/>
    </location>
</feature>
<evidence type="ECO:0000255" key="1">
    <source>
        <dbReference type="HAMAP-Rule" id="MF_01350"/>
    </source>
</evidence>
<gene>
    <name evidence="1" type="primary">nuoH</name>
    <name type="ordered locus">BA_5538</name>
    <name type="ordered locus">GBAA_5538</name>
    <name type="ordered locus">BAS5146</name>
</gene>
<accession>Q81K04</accession>
<accession>Q6HQK3</accession>
<accession>Q6KJX8</accession>
<protein>
    <recommendedName>
        <fullName evidence="1">NADH-quinone oxidoreductase subunit H</fullName>
        <ecNumber evidence="1">7.1.1.-</ecNumber>
    </recommendedName>
    <alternativeName>
        <fullName evidence="1">NADH dehydrogenase I subunit H</fullName>
    </alternativeName>
    <alternativeName>
        <fullName evidence="1">NDH-1 subunit H</fullName>
    </alternativeName>
</protein>
<keyword id="KW-1003">Cell membrane</keyword>
<keyword id="KW-0472">Membrane</keyword>
<keyword id="KW-0520">NAD</keyword>
<keyword id="KW-0874">Quinone</keyword>
<keyword id="KW-1185">Reference proteome</keyword>
<keyword id="KW-1278">Translocase</keyword>
<keyword id="KW-0812">Transmembrane</keyword>
<keyword id="KW-1133">Transmembrane helix</keyword>
<keyword id="KW-0830">Ubiquinone</keyword>
<sequence>MIETLLQSPSSWTNFFIFFGLAVLLLFAVLGFVTYGILAERKVMGFMQGRIGPNQVGGRFGLLQTVADVLKLLLKEDSIPKAADKPLFILAPVIAFAPAFMVLAVIPFTDKFQFADIGVGLLYYIAVSGITTIGVVTGGWASNNKYSLLGGMRAAAQMISYEIPLVMSVIGIVLLAGSLNLNEIVAAQENVWYIFVQPIGFVVFLIAAVAELNRTPFDLPEAESELVSGYHTEYSGFRWAFFMLSEYVYFFGMASLITVLFLGGWNPVMFLGFIPGAVWFALKFSSVVFLLIWFRVTFPRIRGDQLMEFGWKVLLPIALANIFLTALIKELFF</sequence>
<organism>
    <name type="scientific">Bacillus anthracis</name>
    <dbReference type="NCBI Taxonomy" id="1392"/>
    <lineage>
        <taxon>Bacteria</taxon>
        <taxon>Bacillati</taxon>
        <taxon>Bacillota</taxon>
        <taxon>Bacilli</taxon>
        <taxon>Bacillales</taxon>
        <taxon>Bacillaceae</taxon>
        <taxon>Bacillus</taxon>
        <taxon>Bacillus cereus group</taxon>
    </lineage>
</organism>
<proteinExistence type="inferred from homology"/>
<name>NUOH_BACAN</name>